<proteinExistence type="inferred from homology"/>
<protein>
    <recommendedName>
        <fullName evidence="1">Dihydroorotase</fullName>
        <shortName evidence="1">DHOase</shortName>
        <ecNumber evidence="1">3.5.2.3</ecNumber>
    </recommendedName>
</protein>
<organism>
    <name type="scientific">Shewanella sediminis (strain HAW-EB3)</name>
    <dbReference type="NCBI Taxonomy" id="425104"/>
    <lineage>
        <taxon>Bacteria</taxon>
        <taxon>Pseudomonadati</taxon>
        <taxon>Pseudomonadota</taxon>
        <taxon>Gammaproteobacteria</taxon>
        <taxon>Alteromonadales</taxon>
        <taxon>Shewanellaceae</taxon>
        <taxon>Shewanella</taxon>
    </lineage>
</organism>
<name>PYRC_SHESH</name>
<evidence type="ECO:0000255" key="1">
    <source>
        <dbReference type="HAMAP-Rule" id="MF_00219"/>
    </source>
</evidence>
<accession>A8FZC6</accession>
<gene>
    <name evidence="1" type="primary">pyrC</name>
    <name type="ordered locus">Ssed_3595</name>
</gene>
<sequence>MTQITLLTPDDWHLHFRDGDMLKETVPATARLFQRAIVMPNLLPPVTDAKMVIEYRERILAARPEGSDFEPLMTLFLTNDTTEQDIIDAKAAGVVAAKLYPAGATTNSDAAVKALDALFPIFEKMAEVGMLLLVHGEVTESHIDIFDREALFIERNLRRIVDAFPTLKVVFEHITTKEAADFVMSASDNVAATITPQHLLLNRNDLLVGGVRPHNFCLPVLKRNIHQEALRAAIATGSSKFFLGTDSAPHEKHRKESACGCAGCYSAWSALELYAQVFDDLGIIDKLEGFASIHGPDFYGLPRNTSTVTLVKEKWTVPSEIILPNGNPIVPFFAGEEVSWKVKS</sequence>
<dbReference type="EC" id="3.5.2.3" evidence="1"/>
<dbReference type="EMBL" id="CP000821">
    <property type="protein sequence ID" value="ABV38199.1"/>
    <property type="molecule type" value="Genomic_DNA"/>
</dbReference>
<dbReference type="RefSeq" id="WP_012143929.1">
    <property type="nucleotide sequence ID" value="NC_009831.1"/>
</dbReference>
<dbReference type="SMR" id="A8FZC6"/>
<dbReference type="STRING" id="425104.Ssed_3595"/>
<dbReference type="KEGG" id="sse:Ssed_3595"/>
<dbReference type="eggNOG" id="COG0418">
    <property type="taxonomic scope" value="Bacteria"/>
</dbReference>
<dbReference type="HOGENOM" id="CLU_041558_1_0_6"/>
<dbReference type="OrthoDB" id="9808095at2"/>
<dbReference type="UniPathway" id="UPA00070">
    <property type="reaction ID" value="UER00117"/>
</dbReference>
<dbReference type="Proteomes" id="UP000002015">
    <property type="component" value="Chromosome"/>
</dbReference>
<dbReference type="GO" id="GO:0005829">
    <property type="term" value="C:cytosol"/>
    <property type="evidence" value="ECO:0007669"/>
    <property type="project" value="TreeGrafter"/>
</dbReference>
<dbReference type="GO" id="GO:0004151">
    <property type="term" value="F:dihydroorotase activity"/>
    <property type="evidence" value="ECO:0007669"/>
    <property type="project" value="UniProtKB-UniRule"/>
</dbReference>
<dbReference type="GO" id="GO:0008270">
    <property type="term" value="F:zinc ion binding"/>
    <property type="evidence" value="ECO:0007669"/>
    <property type="project" value="UniProtKB-UniRule"/>
</dbReference>
<dbReference type="GO" id="GO:0006207">
    <property type="term" value="P:'de novo' pyrimidine nucleobase biosynthetic process"/>
    <property type="evidence" value="ECO:0007669"/>
    <property type="project" value="TreeGrafter"/>
</dbReference>
<dbReference type="GO" id="GO:0044205">
    <property type="term" value="P:'de novo' UMP biosynthetic process"/>
    <property type="evidence" value="ECO:0007669"/>
    <property type="project" value="UniProtKB-UniRule"/>
</dbReference>
<dbReference type="CDD" id="cd01294">
    <property type="entry name" value="DHOase"/>
    <property type="match status" value="1"/>
</dbReference>
<dbReference type="FunFam" id="3.20.20.140:FF:000006">
    <property type="entry name" value="Dihydroorotase"/>
    <property type="match status" value="1"/>
</dbReference>
<dbReference type="Gene3D" id="3.20.20.140">
    <property type="entry name" value="Metal-dependent hydrolases"/>
    <property type="match status" value="1"/>
</dbReference>
<dbReference type="HAMAP" id="MF_00219">
    <property type="entry name" value="PyrC_classII"/>
    <property type="match status" value="1"/>
</dbReference>
<dbReference type="InterPro" id="IPR006680">
    <property type="entry name" value="Amidohydro-rel"/>
</dbReference>
<dbReference type="InterPro" id="IPR004721">
    <property type="entry name" value="DHOdimr"/>
</dbReference>
<dbReference type="InterPro" id="IPR002195">
    <property type="entry name" value="Dihydroorotase_CS"/>
</dbReference>
<dbReference type="InterPro" id="IPR032466">
    <property type="entry name" value="Metal_Hydrolase"/>
</dbReference>
<dbReference type="NCBIfam" id="TIGR00856">
    <property type="entry name" value="pyrC_dimer"/>
    <property type="match status" value="1"/>
</dbReference>
<dbReference type="PANTHER" id="PTHR43137">
    <property type="entry name" value="DIHYDROOROTASE"/>
    <property type="match status" value="1"/>
</dbReference>
<dbReference type="PANTHER" id="PTHR43137:SF1">
    <property type="entry name" value="DIHYDROOROTASE"/>
    <property type="match status" value="1"/>
</dbReference>
<dbReference type="Pfam" id="PF01979">
    <property type="entry name" value="Amidohydro_1"/>
    <property type="match status" value="1"/>
</dbReference>
<dbReference type="PIRSF" id="PIRSF001237">
    <property type="entry name" value="DHOdimr"/>
    <property type="match status" value="1"/>
</dbReference>
<dbReference type="SUPFAM" id="SSF51556">
    <property type="entry name" value="Metallo-dependent hydrolases"/>
    <property type="match status" value="1"/>
</dbReference>
<dbReference type="PROSITE" id="PS00482">
    <property type="entry name" value="DIHYDROOROTASE_1"/>
    <property type="match status" value="1"/>
</dbReference>
<dbReference type="PROSITE" id="PS00483">
    <property type="entry name" value="DIHYDROOROTASE_2"/>
    <property type="match status" value="1"/>
</dbReference>
<keyword id="KW-0378">Hydrolase</keyword>
<keyword id="KW-0479">Metal-binding</keyword>
<keyword id="KW-0665">Pyrimidine biosynthesis</keyword>
<keyword id="KW-1185">Reference proteome</keyword>
<keyword id="KW-0862">Zinc</keyword>
<feature type="chain" id="PRO_1000078106" description="Dihydroorotase">
    <location>
        <begin position="1"/>
        <end position="344"/>
    </location>
</feature>
<feature type="active site" evidence="1">
    <location>
        <position position="246"/>
    </location>
</feature>
<feature type="binding site" evidence="1">
    <location>
        <position position="13"/>
    </location>
    <ligand>
        <name>Zn(2+)</name>
        <dbReference type="ChEBI" id="CHEBI:29105"/>
        <label>1</label>
    </ligand>
</feature>
<feature type="binding site" evidence="1">
    <location>
        <begin position="15"/>
        <end position="17"/>
    </location>
    <ligand>
        <name>substrate</name>
    </ligand>
</feature>
<feature type="binding site" evidence="1">
    <location>
        <position position="15"/>
    </location>
    <ligand>
        <name>Zn(2+)</name>
        <dbReference type="ChEBI" id="CHEBI:29105"/>
        <label>1</label>
    </ligand>
</feature>
<feature type="binding site" evidence="1">
    <location>
        <position position="41"/>
    </location>
    <ligand>
        <name>substrate</name>
    </ligand>
</feature>
<feature type="binding site" description="via carbamate group" evidence="1">
    <location>
        <position position="98"/>
    </location>
    <ligand>
        <name>Zn(2+)</name>
        <dbReference type="ChEBI" id="CHEBI:29105"/>
        <label>1</label>
    </ligand>
</feature>
<feature type="binding site" description="via carbamate group" evidence="1">
    <location>
        <position position="98"/>
    </location>
    <ligand>
        <name>Zn(2+)</name>
        <dbReference type="ChEBI" id="CHEBI:29105"/>
        <label>2</label>
    </ligand>
</feature>
<feature type="binding site" evidence="1">
    <location>
        <position position="135"/>
    </location>
    <ligand>
        <name>substrate</name>
    </ligand>
</feature>
<feature type="binding site" evidence="1">
    <location>
        <position position="135"/>
    </location>
    <ligand>
        <name>Zn(2+)</name>
        <dbReference type="ChEBI" id="CHEBI:29105"/>
        <label>2</label>
    </ligand>
</feature>
<feature type="binding site" evidence="1">
    <location>
        <position position="173"/>
    </location>
    <ligand>
        <name>Zn(2+)</name>
        <dbReference type="ChEBI" id="CHEBI:29105"/>
        <label>2</label>
    </ligand>
</feature>
<feature type="binding site" evidence="1">
    <location>
        <position position="218"/>
    </location>
    <ligand>
        <name>substrate</name>
    </ligand>
</feature>
<feature type="binding site" evidence="1">
    <location>
        <position position="246"/>
    </location>
    <ligand>
        <name>Zn(2+)</name>
        <dbReference type="ChEBI" id="CHEBI:29105"/>
        <label>1</label>
    </ligand>
</feature>
<feature type="binding site" evidence="1">
    <location>
        <position position="250"/>
    </location>
    <ligand>
        <name>substrate</name>
    </ligand>
</feature>
<feature type="binding site" evidence="1">
    <location>
        <position position="262"/>
    </location>
    <ligand>
        <name>substrate</name>
    </ligand>
</feature>
<feature type="modified residue" description="N6-carboxylysine" evidence="1">
    <location>
        <position position="98"/>
    </location>
</feature>
<comment type="function">
    <text evidence="1">Catalyzes the reversible cyclization of carbamoyl aspartate to dihydroorotate.</text>
</comment>
<comment type="catalytic activity">
    <reaction evidence="1">
        <text>(S)-dihydroorotate + H2O = N-carbamoyl-L-aspartate + H(+)</text>
        <dbReference type="Rhea" id="RHEA:24296"/>
        <dbReference type="ChEBI" id="CHEBI:15377"/>
        <dbReference type="ChEBI" id="CHEBI:15378"/>
        <dbReference type="ChEBI" id="CHEBI:30864"/>
        <dbReference type="ChEBI" id="CHEBI:32814"/>
        <dbReference type="EC" id="3.5.2.3"/>
    </reaction>
</comment>
<comment type="cofactor">
    <cofactor evidence="1">
        <name>Zn(2+)</name>
        <dbReference type="ChEBI" id="CHEBI:29105"/>
    </cofactor>
    <text evidence="1">Binds 2 Zn(2+) ions per subunit.</text>
</comment>
<comment type="pathway">
    <text evidence="1">Pyrimidine metabolism; UMP biosynthesis via de novo pathway; (S)-dihydroorotate from bicarbonate: step 3/3.</text>
</comment>
<comment type="subunit">
    <text evidence="1">Homodimer.</text>
</comment>
<comment type="similarity">
    <text evidence="1">Belongs to the metallo-dependent hydrolases superfamily. DHOase family. Class II DHOase subfamily.</text>
</comment>
<reference key="1">
    <citation type="submission" date="2007-08" db="EMBL/GenBank/DDBJ databases">
        <title>Complete sequence of Shewanella sediminis HAW-EB3.</title>
        <authorList>
            <consortium name="US DOE Joint Genome Institute"/>
            <person name="Copeland A."/>
            <person name="Lucas S."/>
            <person name="Lapidus A."/>
            <person name="Barry K."/>
            <person name="Glavina del Rio T."/>
            <person name="Dalin E."/>
            <person name="Tice H."/>
            <person name="Pitluck S."/>
            <person name="Chertkov O."/>
            <person name="Brettin T."/>
            <person name="Bruce D."/>
            <person name="Detter J.C."/>
            <person name="Han C."/>
            <person name="Schmutz J."/>
            <person name="Larimer F."/>
            <person name="Land M."/>
            <person name="Hauser L."/>
            <person name="Kyrpides N."/>
            <person name="Kim E."/>
            <person name="Zhao J.-S."/>
            <person name="Richardson P."/>
        </authorList>
    </citation>
    <scope>NUCLEOTIDE SEQUENCE [LARGE SCALE GENOMIC DNA]</scope>
    <source>
        <strain>HAW-EB3</strain>
    </source>
</reference>